<keyword id="KW-0963">Cytoplasm</keyword>
<keyword id="KW-0342">GTP-binding</keyword>
<keyword id="KW-0436">Ligase</keyword>
<keyword id="KW-0460">Magnesium</keyword>
<keyword id="KW-0479">Metal-binding</keyword>
<keyword id="KW-0547">Nucleotide-binding</keyword>
<keyword id="KW-0658">Purine biosynthesis</keyword>
<keyword id="KW-1185">Reference proteome</keyword>
<gene>
    <name type="ORF">AAEL003161</name>
</gene>
<evidence type="ECO:0000250" key="1"/>
<evidence type="ECO:0000255" key="2">
    <source>
        <dbReference type="HAMAP-Rule" id="MF_03125"/>
    </source>
</evidence>
<comment type="function">
    <text evidence="1">Plays an important role in the de novo pathway and in the salvage pathway of purine nucleotide biosynthesis. Catalyzes the first committed step in the biosynthesis of AMP from IMP (By similarity).</text>
</comment>
<comment type="catalytic activity">
    <reaction evidence="2">
        <text>IMP + L-aspartate + GTP = N(6)-(1,2-dicarboxyethyl)-AMP + GDP + phosphate + 2 H(+)</text>
        <dbReference type="Rhea" id="RHEA:15753"/>
        <dbReference type="ChEBI" id="CHEBI:15378"/>
        <dbReference type="ChEBI" id="CHEBI:29991"/>
        <dbReference type="ChEBI" id="CHEBI:37565"/>
        <dbReference type="ChEBI" id="CHEBI:43474"/>
        <dbReference type="ChEBI" id="CHEBI:57567"/>
        <dbReference type="ChEBI" id="CHEBI:58053"/>
        <dbReference type="ChEBI" id="CHEBI:58189"/>
        <dbReference type="EC" id="6.3.4.4"/>
    </reaction>
</comment>
<comment type="cofactor">
    <cofactor evidence="2">
        <name>Mg(2+)</name>
        <dbReference type="ChEBI" id="CHEBI:18420"/>
    </cofactor>
    <text evidence="2">Binds 1 Mg(2+) ion per subunit.</text>
</comment>
<comment type="pathway">
    <text evidence="2">Purine metabolism; AMP biosynthesis via de novo pathway; AMP from IMP: step 1/2.</text>
</comment>
<comment type="subunit">
    <text evidence="2">Homodimer.</text>
</comment>
<comment type="subcellular location">
    <subcellularLocation>
        <location evidence="2">Cytoplasm</location>
    </subcellularLocation>
</comment>
<comment type="similarity">
    <text evidence="2">Belongs to the adenylosuccinate synthetase family.</text>
</comment>
<proteinExistence type="inferred from homology"/>
<sequence>MSKMMMNGSGTNGTAAVANNHKEMHQRCLNPYRSKVTVVLGAQWGDEGKGKVVDMLATEADVVCRCQGGNNAGHTVVVNGKDFDFHLLPSGIINDKCTSIIGNGVVIHLPGLFDELAKNEAKGLTNWESRLVISNRAHLVFDLHQQVDGLQEAEKGGKSLGTTKKGIGPCYSSKATRNGIRVSDLLGDFKVFSEKFESLVNMYKRLFPNFEVDVASELVRYRDYAERLRPLVRDTVSLVHASLKEGKSVLVEGANAAMLDIDFGTYPYVTSSNCSIGGVLTGLGLPPQTIGEVVGVVKAYTTRVGDGPFPTELHDEIGSLLQKRGGEIGVTTKRVRRCGWLDLALLRYTGMVNGYTSICLTKLDILDTLKEIKVAVSYTLRGEKIDYFPGSITDLAQVEVNYITMPGWLKSTENVRDFNELPPEAQDYIRMIENDLGVPVKWIGVGKGRESIINVKE</sequence>
<name>PURA_AEDAE</name>
<reference key="1">
    <citation type="journal article" date="2007" name="Science">
        <title>Genome sequence of Aedes aegypti, a major arbovirus vector.</title>
        <authorList>
            <person name="Nene V."/>
            <person name="Wortman J.R."/>
            <person name="Lawson D."/>
            <person name="Haas B.J."/>
            <person name="Kodira C.D."/>
            <person name="Tu Z.J."/>
            <person name="Loftus B.J."/>
            <person name="Xi Z."/>
            <person name="Megy K."/>
            <person name="Grabherr M."/>
            <person name="Ren Q."/>
            <person name="Zdobnov E.M."/>
            <person name="Lobo N.F."/>
            <person name="Campbell K.S."/>
            <person name="Brown S.E."/>
            <person name="Bonaldo M.F."/>
            <person name="Zhu J."/>
            <person name="Sinkins S.P."/>
            <person name="Hogenkamp D.G."/>
            <person name="Amedeo P."/>
            <person name="Arensburger P."/>
            <person name="Atkinson P.W."/>
            <person name="Bidwell S.L."/>
            <person name="Biedler J."/>
            <person name="Birney E."/>
            <person name="Bruggner R.V."/>
            <person name="Costas J."/>
            <person name="Coy M.R."/>
            <person name="Crabtree J."/>
            <person name="Crawford M."/>
            <person name="DeBruyn B."/>
            <person name="DeCaprio D."/>
            <person name="Eiglmeier K."/>
            <person name="Eisenstadt E."/>
            <person name="El-Dorry H."/>
            <person name="Gelbart W.M."/>
            <person name="Gomes S.L."/>
            <person name="Hammond M."/>
            <person name="Hannick L.I."/>
            <person name="Hogan J.R."/>
            <person name="Holmes M.H."/>
            <person name="Jaffe D."/>
            <person name="Johnston S.J."/>
            <person name="Kennedy R.C."/>
            <person name="Koo H."/>
            <person name="Kravitz S."/>
            <person name="Kriventseva E.V."/>
            <person name="Kulp D."/>
            <person name="Labutti K."/>
            <person name="Lee E."/>
            <person name="Li S."/>
            <person name="Lovin D.D."/>
            <person name="Mao C."/>
            <person name="Mauceli E."/>
            <person name="Menck C.F."/>
            <person name="Miller J.R."/>
            <person name="Montgomery P."/>
            <person name="Mori A."/>
            <person name="Nascimento A.L."/>
            <person name="Naveira H.F."/>
            <person name="Nusbaum C."/>
            <person name="O'Leary S.B."/>
            <person name="Orvis J."/>
            <person name="Pertea M."/>
            <person name="Quesneville H."/>
            <person name="Reidenbach K.R."/>
            <person name="Rogers Y.-H.C."/>
            <person name="Roth C.W."/>
            <person name="Schneider J.R."/>
            <person name="Schatz M."/>
            <person name="Shumway M."/>
            <person name="Stanke M."/>
            <person name="Stinson E.O."/>
            <person name="Tubio J.M.C."/>
            <person name="Vanzee J.P."/>
            <person name="Verjovski-Almeida S."/>
            <person name="Werner D."/>
            <person name="White O.R."/>
            <person name="Wyder S."/>
            <person name="Zeng Q."/>
            <person name="Zhao Q."/>
            <person name="Zhao Y."/>
            <person name="Hill C.A."/>
            <person name="Raikhel A.S."/>
            <person name="Soares M.B."/>
            <person name="Knudson D.L."/>
            <person name="Lee N.H."/>
            <person name="Galagan J."/>
            <person name="Salzberg S.L."/>
            <person name="Paulsen I.T."/>
            <person name="Dimopoulos G."/>
            <person name="Collins F.H."/>
            <person name="Bruce B."/>
            <person name="Fraser-Liggett C.M."/>
            <person name="Severson D.W."/>
        </authorList>
    </citation>
    <scope>NUCLEOTIDE SEQUENCE [LARGE SCALE GENOMIC DNA]</scope>
    <source>
        <strain>LVPib12</strain>
    </source>
</reference>
<feature type="chain" id="PRO_0000399256" description="Adenylosuccinate synthetase">
    <location>
        <begin position="1"/>
        <end position="457"/>
    </location>
</feature>
<feature type="active site" description="Proton acceptor" evidence="2">
    <location>
        <position position="46"/>
    </location>
</feature>
<feature type="active site" description="Proton donor" evidence="2">
    <location>
        <position position="74"/>
    </location>
</feature>
<feature type="binding site" evidence="2">
    <location>
        <begin position="45"/>
        <end position="51"/>
    </location>
    <ligand>
        <name>GTP</name>
        <dbReference type="ChEBI" id="CHEBI:37565"/>
    </ligand>
</feature>
<feature type="binding site" description="in other chain" evidence="2">
    <location>
        <begin position="46"/>
        <end position="49"/>
    </location>
    <ligand>
        <name>IMP</name>
        <dbReference type="ChEBI" id="CHEBI:58053"/>
        <note>ligand shared between dimeric partners</note>
    </ligand>
</feature>
<feature type="binding site" evidence="2">
    <location>
        <position position="46"/>
    </location>
    <ligand>
        <name>Mg(2+)</name>
        <dbReference type="ChEBI" id="CHEBI:18420"/>
    </ligand>
</feature>
<feature type="binding site" description="in other chain" evidence="2">
    <location>
        <begin position="71"/>
        <end position="74"/>
    </location>
    <ligand>
        <name>IMP</name>
        <dbReference type="ChEBI" id="CHEBI:58053"/>
        <note>ligand shared between dimeric partners</note>
    </ligand>
</feature>
<feature type="binding site" evidence="2">
    <location>
        <begin position="73"/>
        <end position="75"/>
    </location>
    <ligand>
        <name>GTP</name>
        <dbReference type="ChEBI" id="CHEBI:37565"/>
    </ligand>
</feature>
<feature type="binding site" evidence="2">
    <location>
        <position position="73"/>
    </location>
    <ligand>
        <name>Mg(2+)</name>
        <dbReference type="ChEBI" id="CHEBI:18420"/>
    </ligand>
</feature>
<feature type="binding site" description="in other chain" evidence="2">
    <location>
        <position position="163"/>
    </location>
    <ligand>
        <name>IMP</name>
        <dbReference type="ChEBI" id="CHEBI:58053"/>
        <note>ligand shared between dimeric partners</note>
    </ligand>
</feature>
<feature type="binding site" evidence="2">
    <location>
        <position position="177"/>
    </location>
    <ligand>
        <name>IMP</name>
        <dbReference type="ChEBI" id="CHEBI:58053"/>
        <note>ligand shared between dimeric partners</note>
    </ligand>
</feature>
<feature type="binding site" description="in other chain" evidence="2">
    <location>
        <position position="255"/>
    </location>
    <ligand>
        <name>IMP</name>
        <dbReference type="ChEBI" id="CHEBI:58053"/>
        <note>ligand shared between dimeric partners</note>
    </ligand>
</feature>
<feature type="binding site" description="in other chain" evidence="2">
    <location>
        <position position="270"/>
    </location>
    <ligand>
        <name>IMP</name>
        <dbReference type="ChEBI" id="CHEBI:58053"/>
        <note>ligand shared between dimeric partners</note>
    </ligand>
</feature>
<feature type="binding site" evidence="2">
    <location>
        <begin position="330"/>
        <end position="336"/>
    </location>
    <ligand>
        <name>substrate</name>
    </ligand>
</feature>
<feature type="binding site" description="in other chain" evidence="2">
    <location>
        <position position="334"/>
    </location>
    <ligand>
        <name>IMP</name>
        <dbReference type="ChEBI" id="CHEBI:58053"/>
        <note>ligand shared between dimeric partners</note>
    </ligand>
</feature>
<feature type="binding site" evidence="2">
    <location>
        <position position="336"/>
    </location>
    <ligand>
        <name>GTP</name>
        <dbReference type="ChEBI" id="CHEBI:37565"/>
    </ligand>
</feature>
<feature type="binding site" evidence="2">
    <location>
        <begin position="362"/>
        <end position="364"/>
    </location>
    <ligand>
        <name>GTP</name>
        <dbReference type="ChEBI" id="CHEBI:37565"/>
    </ligand>
</feature>
<feature type="binding site" evidence="2">
    <location>
        <begin position="444"/>
        <end position="446"/>
    </location>
    <ligand>
        <name>GTP</name>
        <dbReference type="ChEBI" id="CHEBI:37565"/>
    </ligand>
</feature>
<protein>
    <recommendedName>
        <fullName evidence="2">Adenylosuccinate synthetase</fullName>
        <shortName evidence="2">AMPSase</shortName>
        <shortName evidence="2">AdSS</shortName>
        <ecNumber evidence="2">6.3.4.4</ecNumber>
    </recommendedName>
    <alternativeName>
        <fullName evidence="2">IMP--aspartate ligase</fullName>
    </alternativeName>
</protein>
<dbReference type="EC" id="6.3.4.4" evidence="2"/>
<dbReference type="EMBL" id="CH477265">
    <property type="protein sequence ID" value="EAT45573.1"/>
    <property type="molecule type" value="Genomic_DNA"/>
</dbReference>
<dbReference type="SMR" id="Q17G75"/>
<dbReference type="FunCoup" id="Q17G75">
    <property type="interactions" value="1380"/>
</dbReference>
<dbReference type="STRING" id="7159.Q17G75"/>
<dbReference type="PaxDb" id="7159-AAEL003161-PA"/>
<dbReference type="EnsemblMetazoa" id="AAEL003161-RA">
    <property type="protein sequence ID" value="AAEL003161-PA"/>
    <property type="gene ID" value="AAEL003161"/>
</dbReference>
<dbReference type="GeneID" id="5577407"/>
<dbReference type="KEGG" id="aag:5577407"/>
<dbReference type="VEuPathDB" id="VectorBase:AAEL003161"/>
<dbReference type="eggNOG" id="KOG1355">
    <property type="taxonomic scope" value="Eukaryota"/>
</dbReference>
<dbReference type="HOGENOM" id="CLU_029848_3_0_1"/>
<dbReference type="InParanoid" id="Q17G75"/>
<dbReference type="OMA" id="QSYVRFL"/>
<dbReference type="OrthoDB" id="10265645at2759"/>
<dbReference type="PhylomeDB" id="Q17G75"/>
<dbReference type="UniPathway" id="UPA00075">
    <property type="reaction ID" value="UER00335"/>
</dbReference>
<dbReference type="Proteomes" id="UP000008820">
    <property type="component" value="Chromosome 1"/>
</dbReference>
<dbReference type="Proteomes" id="UP000682892">
    <property type="component" value="Chromosome 2"/>
</dbReference>
<dbReference type="GO" id="GO:0005737">
    <property type="term" value="C:cytoplasm"/>
    <property type="evidence" value="ECO:0007669"/>
    <property type="project" value="UniProtKB-SubCell"/>
</dbReference>
<dbReference type="GO" id="GO:0004019">
    <property type="term" value="F:adenylosuccinate synthase activity"/>
    <property type="evidence" value="ECO:0007669"/>
    <property type="project" value="UniProtKB-UniRule"/>
</dbReference>
<dbReference type="GO" id="GO:0005525">
    <property type="term" value="F:GTP binding"/>
    <property type="evidence" value="ECO:0007669"/>
    <property type="project" value="UniProtKB-UniRule"/>
</dbReference>
<dbReference type="GO" id="GO:0000287">
    <property type="term" value="F:magnesium ion binding"/>
    <property type="evidence" value="ECO:0007669"/>
    <property type="project" value="UniProtKB-UniRule"/>
</dbReference>
<dbReference type="GO" id="GO:0044208">
    <property type="term" value="P:'de novo' AMP biosynthetic process"/>
    <property type="evidence" value="ECO:0007669"/>
    <property type="project" value="UniProtKB-UniRule"/>
</dbReference>
<dbReference type="GO" id="GO:0046040">
    <property type="term" value="P:IMP metabolic process"/>
    <property type="evidence" value="ECO:0007669"/>
    <property type="project" value="TreeGrafter"/>
</dbReference>
<dbReference type="CDD" id="cd03108">
    <property type="entry name" value="AdSS"/>
    <property type="match status" value="1"/>
</dbReference>
<dbReference type="FunFam" id="3.90.170.10:FF:000001">
    <property type="entry name" value="Adenylosuccinate synthetase"/>
    <property type="match status" value="1"/>
</dbReference>
<dbReference type="FunFam" id="1.10.300.10:FF:000002">
    <property type="entry name" value="Adenylosuccinate synthetase, chloroplastic"/>
    <property type="match status" value="1"/>
</dbReference>
<dbReference type="Gene3D" id="3.40.440.10">
    <property type="entry name" value="Adenylosuccinate Synthetase, subunit A, domain 1"/>
    <property type="match status" value="1"/>
</dbReference>
<dbReference type="Gene3D" id="1.10.300.10">
    <property type="entry name" value="Adenylosuccinate Synthetase, subunit A, domain 2"/>
    <property type="match status" value="1"/>
</dbReference>
<dbReference type="Gene3D" id="3.90.170.10">
    <property type="entry name" value="Adenylosuccinate Synthetase, subunit A, domain 3"/>
    <property type="match status" value="1"/>
</dbReference>
<dbReference type="HAMAP" id="MF_00011">
    <property type="entry name" value="Adenylosucc_synth"/>
    <property type="match status" value="1"/>
</dbReference>
<dbReference type="InterPro" id="IPR018220">
    <property type="entry name" value="Adenylosuccin_syn_GTP-bd"/>
</dbReference>
<dbReference type="InterPro" id="IPR033128">
    <property type="entry name" value="Adenylosuccin_syn_Lys_AS"/>
</dbReference>
<dbReference type="InterPro" id="IPR042109">
    <property type="entry name" value="Adenylosuccinate_synth_dom1"/>
</dbReference>
<dbReference type="InterPro" id="IPR042110">
    <property type="entry name" value="Adenylosuccinate_synth_dom2"/>
</dbReference>
<dbReference type="InterPro" id="IPR042111">
    <property type="entry name" value="Adenylosuccinate_synth_dom3"/>
</dbReference>
<dbReference type="InterPro" id="IPR001114">
    <property type="entry name" value="Adenylosuccinate_synthetase"/>
</dbReference>
<dbReference type="InterPro" id="IPR027417">
    <property type="entry name" value="P-loop_NTPase"/>
</dbReference>
<dbReference type="NCBIfam" id="NF002223">
    <property type="entry name" value="PRK01117.1"/>
    <property type="match status" value="1"/>
</dbReference>
<dbReference type="NCBIfam" id="TIGR00184">
    <property type="entry name" value="purA"/>
    <property type="match status" value="1"/>
</dbReference>
<dbReference type="PANTHER" id="PTHR11846">
    <property type="entry name" value="ADENYLOSUCCINATE SYNTHETASE"/>
    <property type="match status" value="1"/>
</dbReference>
<dbReference type="PANTHER" id="PTHR11846:SF0">
    <property type="entry name" value="ADENYLOSUCCINATE SYNTHETASE"/>
    <property type="match status" value="1"/>
</dbReference>
<dbReference type="Pfam" id="PF00709">
    <property type="entry name" value="Adenylsucc_synt"/>
    <property type="match status" value="1"/>
</dbReference>
<dbReference type="SMART" id="SM00788">
    <property type="entry name" value="Adenylsucc_synt"/>
    <property type="match status" value="1"/>
</dbReference>
<dbReference type="SUPFAM" id="SSF52540">
    <property type="entry name" value="P-loop containing nucleoside triphosphate hydrolases"/>
    <property type="match status" value="1"/>
</dbReference>
<dbReference type="PROSITE" id="PS01266">
    <property type="entry name" value="ADENYLOSUCCIN_SYN_1"/>
    <property type="match status" value="1"/>
</dbReference>
<dbReference type="PROSITE" id="PS00513">
    <property type="entry name" value="ADENYLOSUCCIN_SYN_2"/>
    <property type="match status" value="1"/>
</dbReference>
<accession>Q17G75</accession>
<organism>
    <name type="scientific">Aedes aegypti</name>
    <name type="common">Yellowfever mosquito</name>
    <name type="synonym">Culex aegypti</name>
    <dbReference type="NCBI Taxonomy" id="7159"/>
    <lineage>
        <taxon>Eukaryota</taxon>
        <taxon>Metazoa</taxon>
        <taxon>Ecdysozoa</taxon>
        <taxon>Arthropoda</taxon>
        <taxon>Hexapoda</taxon>
        <taxon>Insecta</taxon>
        <taxon>Pterygota</taxon>
        <taxon>Neoptera</taxon>
        <taxon>Endopterygota</taxon>
        <taxon>Diptera</taxon>
        <taxon>Nematocera</taxon>
        <taxon>Culicoidea</taxon>
        <taxon>Culicidae</taxon>
        <taxon>Culicinae</taxon>
        <taxon>Aedini</taxon>
        <taxon>Aedes</taxon>
        <taxon>Stegomyia</taxon>
    </lineage>
</organism>